<keyword id="KW-0021">Allosteric enzyme</keyword>
<keyword id="KW-0067">ATP-binding</keyword>
<keyword id="KW-0963">Cytoplasm</keyword>
<keyword id="KW-0324">Glycolysis</keyword>
<keyword id="KW-0418">Kinase</keyword>
<keyword id="KW-0460">Magnesium</keyword>
<keyword id="KW-0479">Metal-binding</keyword>
<keyword id="KW-0547">Nucleotide-binding</keyword>
<keyword id="KW-1185">Reference proteome</keyword>
<keyword id="KW-0808">Transferase</keyword>
<accession>Q8DQ85</accession>
<sequence length="335" mass="35213">MKRIAVLTSGGDAPGMNAAIRAVVRQAISEGMEVFGIYDGYAGMVAGEIHPLDAASVGDIISRGGTFLHSARYPEFAQLEGQLKGIEQLKKHGIEGVVVIGGDGSYHGAMRLTEHGFPAIGLPGTIDNDIVGTDFTIGFDTAVTTAMDAIDKIRDTSSSHRRTFVIEVMGRNAGDIALWAGIATGADEIIIPEAGFKMEDIVASIKAGYECGKKHNIIVLAEGVMSAAEFGQKLKEAGDISDLRVTELGHIQRGGSPTPRDRVLASRMGAHAVKLLKEGIGGVAVGIRNEKMVENPILGTAEEGALFSLTAEGKIVVNNPHEADIELSSLNKSLS</sequence>
<feature type="chain" id="PRO_0000111991" description="ATP-dependent 6-phosphofructokinase">
    <location>
        <begin position="1"/>
        <end position="335"/>
    </location>
</feature>
<feature type="active site" description="Proton acceptor" evidence="1">
    <location>
        <position position="127"/>
    </location>
</feature>
<feature type="binding site" evidence="1">
    <location>
        <position position="11"/>
    </location>
    <ligand>
        <name>ATP</name>
        <dbReference type="ChEBI" id="CHEBI:30616"/>
    </ligand>
</feature>
<feature type="binding site" evidence="1">
    <location>
        <begin position="21"/>
        <end position="25"/>
    </location>
    <ligand>
        <name>ADP</name>
        <dbReference type="ChEBI" id="CHEBI:456216"/>
        <note>allosteric activator; ligand shared between dimeric partners</note>
    </ligand>
</feature>
<feature type="binding site" evidence="1">
    <location>
        <begin position="72"/>
        <end position="73"/>
    </location>
    <ligand>
        <name>ATP</name>
        <dbReference type="ChEBI" id="CHEBI:30616"/>
    </ligand>
</feature>
<feature type="binding site" evidence="1">
    <location>
        <begin position="102"/>
        <end position="105"/>
    </location>
    <ligand>
        <name>ATP</name>
        <dbReference type="ChEBI" id="CHEBI:30616"/>
    </ligand>
</feature>
<feature type="binding site" evidence="1">
    <location>
        <position position="103"/>
    </location>
    <ligand>
        <name>Mg(2+)</name>
        <dbReference type="ChEBI" id="CHEBI:18420"/>
        <note>catalytic</note>
    </ligand>
</feature>
<feature type="binding site" description="in other chain" evidence="1">
    <location>
        <begin position="125"/>
        <end position="127"/>
    </location>
    <ligand>
        <name>substrate</name>
        <note>ligand shared between dimeric partners</note>
    </ligand>
</feature>
<feature type="binding site" description="in other chain" evidence="1">
    <location>
        <position position="154"/>
    </location>
    <ligand>
        <name>ADP</name>
        <dbReference type="ChEBI" id="CHEBI:456216"/>
        <note>allosteric activator; ligand shared between dimeric partners</note>
    </ligand>
</feature>
<feature type="binding site" evidence="1">
    <location>
        <position position="162"/>
    </location>
    <ligand>
        <name>substrate</name>
        <note>ligand shared between dimeric partners</note>
    </ligand>
</feature>
<feature type="binding site" description="in other chain" evidence="1">
    <location>
        <begin position="169"/>
        <end position="171"/>
    </location>
    <ligand>
        <name>substrate</name>
        <note>ligand shared between dimeric partners</note>
    </ligand>
</feature>
<feature type="binding site" description="in other chain" evidence="1">
    <location>
        <begin position="185"/>
        <end position="187"/>
    </location>
    <ligand>
        <name>ADP</name>
        <dbReference type="ChEBI" id="CHEBI:456216"/>
        <note>allosteric activator; ligand shared between dimeric partners</note>
    </ligand>
</feature>
<feature type="binding site" description="in other chain" evidence="1">
    <location>
        <begin position="213"/>
        <end position="215"/>
    </location>
    <ligand>
        <name>ADP</name>
        <dbReference type="ChEBI" id="CHEBI:456216"/>
        <note>allosteric activator; ligand shared between dimeric partners</note>
    </ligand>
</feature>
<feature type="binding site" description="in other chain" evidence="1">
    <location>
        <position position="222"/>
    </location>
    <ligand>
        <name>substrate</name>
        <note>ligand shared between dimeric partners</note>
    </ligand>
</feature>
<feature type="binding site" evidence="1">
    <location>
        <position position="244"/>
    </location>
    <ligand>
        <name>substrate</name>
        <note>ligand shared between dimeric partners</note>
    </ligand>
</feature>
<feature type="binding site" description="in other chain" evidence="1">
    <location>
        <begin position="250"/>
        <end position="253"/>
    </location>
    <ligand>
        <name>substrate</name>
        <note>ligand shared between dimeric partners</note>
    </ligand>
</feature>
<name>PFKA_STRR6</name>
<dbReference type="EC" id="2.7.1.11" evidence="1"/>
<dbReference type="EMBL" id="AE007317">
    <property type="protein sequence ID" value="AAK99600.1"/>
    <property type="molecule type" value="Genomic_DNA"/>
</dbReference>
<dbReference type="PIR" id="D97971">
    <property type="entry name" value="D97971"/>
</dbReference>
<dbReference type="RefSeq" id="NP_358390.1">
    <property type="nucleotide sequence ID" value="NC_003098.1"/>
</dbReference>
<dbReference type="RefSeq" id="WP_000820847.1">
    <property type="nucleotide sequence ID" value="NC_003098.1"/>
</dbReference>
<dbReference type="SMR" id="Q8DQ85"/>
<dbReference type="STRING" id="171101.spr0796"/>
<dbReference type="KEGG" id="spr:spr0796"/>
<dbReference type="PATRIC" id="fig|171101.6.peg.883"/>
<dbReference type="eggNOG" id="COG0205">
    <property type="taxonomic scope" value="Bacteria"/>
</dbReference>
<dbReference type="HOGENOM" id="CLU_020655_0_1_9"/>
<dbReference type="UniPathway" id="UPA00109">
    <property type="reaction ID" value="UER00182"/>
</dbReference>
<dbReference type="Proteomes" id="UP000000586">
    <property type="component" value="Chromosome"/>
</dbReference>
<dbReference type="GO" id="GO:0005945">
    <property type="term" value="C:6-phosphofructokinase complex"/>
    <property type="evidence" value="ECO:0000318"/>
    <property type="project" value="GO_Central"/>
</dbReference>
<dbReference type="GO" id="GO:0003872">
    <property type="term" value="F:6-phosphofructokinase activity"/>
    <property type="evidence" value="ECO:0000318"/>
    <property type="project" value="GO_Central"/>
</dbReference>
<dbReference type="GO" id="GO:0005524">
    <property type="term" value="F:ATP binding"/>
    <property type="evidence" value="ECO:0007669"/>
    <property type="project" value="UniProtKB-KW"/>
</dbReference>
<dbReference type="GO" id="GO:0070095">
    <property type="term" value="F:fructose-6-phosphate binding"/>
    <property type="evidence" value="ECO:0000318"/>
    <property type="project" value="GO_Central"/>
</dbReference>
<dbReference type="GO" id="GO:0046872">
    <property type="term" value="F:metal ion binding"/>
    <property type="evidence" value="ECO:0007669"/>
    <property type="project" value="UniProtKB-KW"/>
</dbReference>
<dbReference type="GO" id="GO:0061621">
    <property type="term" value="P:canonical glycolysis"/>
    <property type="evidence" value="ECO:0000318"/>
    <property type="project" value="GO_Central"/>
</dbReference>
<dbReference type="GO" id="GO:0030388">
    <property type="term" value="P:fructose 1,6-bisphosphate metabolic process"/>
    <property type="evidence" value="ECO:0000318"/>
    <property type="project" value="GO_Central"/>
</dbReference>
<dbReference type="GO" id="GO:0006002">
    <property type="term" value="P:fructose 6-phosphate metabolic process"/>
    <property type="evidence" value="ECO:0000318"/>
    <property type="project" value="GO_Central"/>
</dbReference>
<dbReference type="CDD" id="cd00763">
    <property type="entry name" value="Bacterial_PFK"/>
    <property type="match status" value="1"/>
</dbReference>
<dbReference type="FunFam" id="3.40.50.450:FF:000001">
    <property type="entry name" value="ATP-dependent 6-phosphofructokinase"/>
    <property type="match status" value="1"/>
</dbReference>
<dbReference type="FunFam" id="3.40.50.460:FF:000002">
    <property type="entry name" value="ATP-dependent 6-phosphofructokinase"/>
    <property type="match status" value="1"/>
</dbReference>
<dbReference type="Gene3D" id="3.40.50.450">
    <property type="match status" value="1"/>
</dbReference>
<dbReference type="Gene3D" id="3.40.50.460">
    <property type="entry name" value="Phosphofructokinase domain"/>
    <property type="match status" value="1"/>
</dbReference>
<dbReference type="HAMAP" id="MF_00339">
    <property type="entry name" value="Phosphofructokinase_I_B1"/>
    <property type="match status" value="1"/>
</dbReference>
<dbReference type="InterPro" id="IPR022953">
    <property type="entry name" value="ATP_PFK"/>
</dbReference>
<dbReference type="InterPro" id="IPR012003">
    <property type="entry name" value="ATP_PFK_prok-type"/>
</dbReference>
<dbReference type="InterPro" id="IPR012828">
    <property type="entry name" value="PFKA_ATP_prok"/>
</dbReference>
<dbReference type="InterPro" id="IPR015912">
    <property type="entry name" value="Phosphofructokinase_CS"/>
</dbReference>
<dbReference type="InterPro" id="IPR000023">
    <property type="entry name" value="Phosphofructokinase_dom"/>
</dbReference>
<dbReference type="InterPro" id="IPR035966">
    <property type="entry name" value="PKF_sf"/>
</dbReference>
<dbReference type="NCBIfam" id="TIGR02482">
    <property type="entry name" value="PFKA_ATP"/>
    <property type="match status" value="1"/>
</dbReference>
<dbReference type="NCBIfam" id="NF002872">
    <property type="entry name" value="PRK03202.1"/>
    <property type="match status" value="1"/>
</dbReference>
<dbReference type="PANTHER" id="PTHR13697:SF4">
    <property type="entry name" value="ATP-DEPENDENT 6-PHOSPHOFRUCTOKINASE"/>
    <property type="match status" value="1"/>
</dbReference>
<dbReference type="PANTHER" id="PTHR13697">
    <property type="entry name" value="PHOSPHOFRUCTOKINASE"/>
    <property type="match status" value="1"/>
</dbReference>
<dbReference type="Pfam" id="PF00365">
    <property type="entry name" value="PFK"/>
    <property type="match status" value="1"/>
</dbReference>
<dbReference type="PIRSF" id="PIRSF000532">
    <property type="entry name" value="ATP_PFK_prok"/>
    <property type="match status" value="1"/>
</dbReference>
<dbReference type="PRINTS" id="PR00476">
    <property type="entry name" value="PHFRCTKINASE"/>
</dbReference>
<dbReference type="SUPFAM" id="SSF53784">
    <property type="entry name" value="Phosphofructokinase"/>
    <property type="match status" value="1"/>
</dbReference>
<dbReference type="PROSITE" id="PS00433">
    <property type="entry name" value="PHOSPHOFRUCTOKINASE"/>
    <property type="match status" value="1"/>
</dbReference>
<protein>
    <recommendedName>
        <fullName evidence="1">ATP-dependent 6-phosphofructokinase</fullName>
        <shortName evidence="1">ATP-PFK</shortName>
        <shortName evidence="1">Phosphofructokinase</shortName>
        <ecNumber evidence="1">2.7.1.11</ecNumber>
    </recommendedName>
    <alternativeName>
        <fullName evidence="1">Phosphohexokinase</fullName>
    </alternativeName>
</protein>
<proteinExistence type="inferred from homology"/>
<reference key="1">
    <citation type="journal article" date="2001" name="J. Bacteriol.">
        <title>Genome of the bacterium Streptococcus pneumoniae strain R6.</title>
        <authorList>
            <person name="Hoskins J."/>
            <person name="Alborn W.E. Jr."/>
            <person name="Arnold J."/>
            <person name="Blaszczak L.C."/>
            <person name="Burgett S."/>
            <person name="DeHoff B.S."/>
            <person name="Estrem S.T."/>
            <person name="Fritz L."/>
            <person name="Fu D.-J."/>
            <person name="Fuller W."/>
            <person name="Geringer C."/>
            <person name="Gilmour R."/>
            <person name="Glass J.S."/>
            <person name="Khoja H."/>
            <person name="Kraft A.R."/>
            <person name="Lagace R.E."/>
            <person name="LeBlanc D.J."/>
            <person name="Lee L.N."/>
            <person name="Lefkowitz E.J."/>
            <person name="Lu J."/>
            <person name="Matsushima P."/>
            <person name="McAhren S.M."/>
            <person name="McHenney M."/>
            <person name="McLeaster K."/>
            <person name="Mundy C.W."/>
            <person name="Nicas T.I."/>
            <person name="Norris F.H."/>
            <person name="O'Gara M."/>
            <person name="Peery R.B."/>
            <person name="Robertson G.T."/>
            <person name="Rockey P."/>
            <person name="Sun P.-M."/>
            <person name="Winkler M.E."/>
            <person name="Yang Y."/>
            <person name="Young-Bellido M."/>
            <person name="Zhao G."/>
            <person name="Zook C.A."/>
            <person name="Baltz R.H."/>
            <person name="Jaskunas S.R."/>
            <person name="Rosteck P.R. Jr."/>
            <person name="Skatrud P.L."/>
            <person name="Glass J.I."/>
        </authorList>
    </citation>
    <scope>NUCLEOTIDE SEQUENCE [LARGE SCALE GENOMIC DNA]</scope>
    <source>
        <strain>ATCC BAA-255 / R6</strain>
    </source>
</reference>
<evidence type="ECO:0000255" key="1">
    <source>
        <dbReference type="HAMAP-Rule" id="MF_00339"/>
    </source>
</evidence>
<comment type="function">
    <text evidence="1">Catalyzes the phosphorylation of D-fructose 6-phosphate to fructose 1,6-bisphosphate by ATP, the first committing step of glycolysis.</text>
</comment>
<comment type="catalytic activity">
    <reaction evidence="1">
        <text>beta-D-fructose 6-phosphate + ATP = beta-D-fructose 1,6-bisphosphate + ADP + H(+)</text>
        <dbReference type="Rhea" id="RHEA:16109"/>
        <dbReference type="ChEBI" id="CHEBI:15378"/>
        <dbReference type="ChEBI" id="CHEBI:30616"/>
        <dbReference type="ChEBI" id="CHEBI:32966"/>
        <dbReference type="ChEBI" id="CHEBI:57634"/>
        <dbReference type="ChEBI" id="CHEBI:456216"/>
        <dbReference type="EC" id="2.7.1.11"/>
    </reaction>
</comment>
<comment type="cofactor">
    <cofactor evidence="1">
        <name>Mg(2+)</name>
        <dbReference type="ChEBI" id="CHEBI:18420"/>
    </cofactor>
</comment>
<comment type="activity regulation">
    <text evidence="1">Allosterically activated by ADP and other diphosphonucleosides, and allosterically inhibited by phosphoenolpyruvate.</text>
</comment>
<comment type="pathway">
    <text evidence="1">Carbohydrate degradation; glycolysis; D-glyceraldehyde 3-phosphate and glycerone phosphate from D-glucose: step 3/4.</text>
</comment>
<comment type="subunit">
    <text evidence="1">Homotetramer.</text>
</comment>
<comment type="subcellular location">
    <subcellularLocation>
        <location evidence="1">Cytoplasm</location>
    </subcellularLocation>
</comment>
<comment type="similarity">
    <text evidence="1">Belongs to the phosphofructokinase type A (PFKA) family. ATP-dependent PFK group I subfamily. Prokaryotic clade 'B1' sub-subfamily.</text>
</comment>
<gene>
    <name evidence="1" type="primary">pfkA</name>
    <name type="ordered locus">spr0796</name>
</gene>
<organism>
    <name type="scientific">Streptococcus pneumoniae (strain ATCC BAA-255 / R6)</name>
    <dbReference type="NCBI Taxonomy" id="171101"/>
    <lineage>
        <taxon>Bacteria</taxon>
        <taxon>Bacillati</taxon>
        <taxon>Bacillota</taxon>
        <taxon>Bacilli</taxon>
        <taxon>Lactobacillales</taxon>
        <taxon>Streptococcaceae</taxon>
        <taxon>Streptococcus</taxon>
    </lineage>
</organism>